<sequence length="748" mass="84258">MEENNDSTENPQQGQGRQNAIKCGWLRKQGGFVKTWHTRWFVLKGDQLYYFKDEDETKPLGTIFLPGNKVSEHPCNEENPGKFLFEVVPGGDRDRMTANHESYLLMASTQNDMEDWVKSIRRVIWGPFGGGIFGQKLEDTVRYEKRYGNRLAPMLVEQCVDFIRQRGLKEEGLFRLPGQANLVKELQDAFDCGEKPSFDSNTDVHTVASLLKLYLRELPEPVIPYAKYEDFLSCAKLLSKEEEAGVKELAKQVKSLPVVNYNLLKYICRFLDEVQSYSGVNKMSVQNLATVFGPNILRPKVEDPLTIMEGTVVVQQLMSVMISKHDCLFPKDAELQSKPQDGVSNNNEIQKKATMGQLQNKENNNTKDSPSRQCSWDKSESPQRSSMNNGSPTALSGSKTNSPKNSVHKLDVSRSPPLMVKKNPAFNKGSGIVTNGSFSSSNAEGLEKTQTTPNGSLQARRSSSLKVSGTKMGTHSVQNGTVRMGILNSDTLGNPTNVRNMSWLPNGYVTLRDNKQKEQAGELGQHNRLSTYDNVHQQFSMMNLDDKQSIDSATWSTSSCEISLPENSNSCRSSTTTCPEQDFFGGNFEDPVLDGPPQDDLSHPRDYESKSDHRSVGGRSSRATSSSDNSETFVGNSSSNHSALHSLVSSLKQEMTKQKIEYESRIKSLEQRNLTLETEMMSLHDELDQERKKFTMIEIKMRNAERAKEDAEKRNDMLQKEMEQFFSTFGELTVEPRRTERGNTIWIQ</sequence>
<evidence type="ECO:0000250" key="1">
    <source>
        <dbReference type="UniProtKB" id="Q5U2Z7"/>
    </source>
</evidence>
<evidence type="ECO:0000250" key="2">
    <source>
        <dbReference type="UniProtKB" id="Q8C4V1"/>
    </source>
</evidence>
<evidence type="ECO:0000255" key="3"/>
<evidence type="ECO:0000255" key="4">
    <source>
        <dbReference type="PROSITE-ProRule" id="PRU00145"/>
    </source>
</evidence>
<evidence type="ECO:0000255" key="5">
    <source>
        <dbReference type="PROSITE-ProRule" id="PRU00172"/>
    </source>
</evidence>
<evidence type="ECO:0000256" key="6">
    <source>
        <dbReference type="SAM" id="MobiDB-lite"/>
    </source>
</evidence>
<evidence type="ECO:0000269" key="7">
    <source>
    </source>
</evidence>
<evidence type="ECO:0000269" key="8">
    <source>
    </source>
</evidence>
<evidence type="ECO:0000269" key="9">
    <source>
    </source>
</evidence>
<evidence type="ECO:0000303" key="10">
    <source>
    </source>
</evidence>
<evidence type="ECO:0000303" key="11">
    <source>
    </source>
</evidence>
<evidence type="ECO:0000303" key="12">
    <source>
    </source>
</evidence>
<evidence type="ECO:0000305" key="13"/>
<evidence type="ECO:0007744" key="14">
    <source>
    </source>
</evidence>
<keyword id="KW-0025">Alternative splicing</keyword>
<keyword id="KW-0037">Angiogenesis</keyword>
<keyword id="KW-0965">Cell junction</keyword>
<keyword id="KW-0966">Cell projection</keyword>
<keyword id="KW-0175">Coiled coil</keyword>
<keyword id="KW-0963">Cytoplasm</keyword>
<keyword id="KW-0206">Cytoskeleton</keyword>
<keyword id="KW-0217">Developmental protein</keyword>
<keyword id="KW-0221">Differentiation</keyword>
<keyword id="KW-0343">GTPase activation</keyword>
<keyword id="KW-0597">Phosphoprotein</keyword>
<keyword id="KW-1267">Proteomics identification</keyword>
<keyword id="KW-1185">Reference proteome</keyword>
<proteinExistence type="evidence at protein level"/>
<feature type="chain" id="PRO_0000280473" description="Rho GTPase-activating protein 24">
    <location>
        <begin position="1"/>
        <end position="748"/>
    </location>
</feature>
<feature type="domain" description="PH" evidence="4">
    <location>
        <begin position="19"/>
        <end position="125"/>
    </location>
</feature>
<feature type="domain" description="Rho-GAP" evidence="5">
    <location>
        <begin position="135"/>
        <end position="329"/>
    </location>
</feature>
<feature type="region of interest" description="Disordered" evidence="6">
    <location>
        <begin position="1"/>
        <end position="20"/>
    </location>
</feature>
<feature type="region of interest" description="Disordered" evidence="6">
    <location>
        <begin position="354"/>
        <end position="476"/>
    </location>
</feature>
<feature type="region of interest" description="Disordered" evidence="6">
    <location>
        <begin position="582"/>
        <end position="641"/>
    </location>
</feature>
<feature type="coiled-coil region" evidence="3">
    <location>
        <begin position="649"/>
        <end position="729"/>
    </location>
</feature>
<feature type="compositionally biased region" description="Polar residues" evidence="6">
    <location>
        <begin position="7"/>
        <end position="18"/>
    </location>
</feature>
<feature type="compositionally biased region" description="Polar residues" evidence="6">
    <location>
        <begin position="356"/>
        <end position="374"/>
    </location>
</feature>
<feature type="compositionally biased region" description="Polar residues" evidence="6">
    <location>
        <begin position="382"/>
        <end position="405"/>
    </location>
</feature>
<feature type="compositionally biased region" description="Polar residues" evidence="6">
    <location>
        <begin position="432"/>
        <end position="476"/>
    </location>
</feature>
<feature type="compositionally biased region" description="Basic and acidic residues" evidence="6">
    <location>
        <begin position="600"/>
        <end position="615"/>
    </location>
</feature>
<feature type="compositionally biased region" description="Low complexity" evidence="6">
    <location>
        <begin position="617"/>
        <end position="641"/>
    </location>
</feature>
<feature type="site" description="Arginine finger; crucial for GTP hydrolysis by stabilizing the transition state" evidence="5">
    <location>
        <position position="175"/>
    </location>
</feature>
<feature type="modified residue" description="Phosphoserine" evidence="1">
    <location>
        <position position="369"/>
    </location>
</feature>
<feature type="modified residue" description="Phosphoserine" evidence="9">
    <location>
        <position position="391"/>
    </location>
</feature>
<feature type="modified residue" description="Phosphoserine" evidence="2">
    <location>
        <position position="396"/>
    </location>
</feature>
<feature type="modified residue" description="Phosphoserine" evidence="2">
    <location>
        <position position="398"/>
    </location>
</feature>
<feature type="modified residue" description="Phosphoserine" evidence="9">
    <location>
        <position position="402"/>
    </location>
</feature>
<feature type="modified residue" description="Phosphoserine" evidence="9">
    <location>
        <position position="413"/>
    </location>
</feature>
<feature type="modified residue" description="Phosphoserine" evidence="9 14">
    <location>
        <position position="415"/>
    </location>
</feature>
<feature type="modified residue" description="Phosphoserine" evidence="9">
    <location>
        <position position="437"/>
    </location>
</feature>
<feature type="modified residue" description="Phosphothreonine" evidence="9">
    <location>
        <position position="452"/>
    </location>
</feature>
<feature type="splice variant" id="VSP_023711" description="In isoform 3." evidence="12">
    <location>
        <begin position="1"/>
        <end position="95"/>
    </location>
</feature>
<feature type="splice variant" id="VSP_023712" description="In isoform 2." evidence="10">
    <location>
        <begin position="1"/>
        <end position="93"/>
    </location>
</feature>
<feature type="splice variant" id="VSP_023713" description="In isoform 5." evidence="11">
    <original>M</original>
    <variation>MWLRKKDWQIFNEQFLKKEHAVGFCFSKCVLVEFSLKCFKKIKSSYWNNDALAFLGKKFLREKNKMTKKQTRNRQNKFPPKPALRSSPVHRVQHFPLLWKVKEPHYHLFFFAFSYCWSWEPFPSEQQPCPASVLSSQQGKSISLIM</variation>
    <location>
        <position position="1"/>
    </location>
</feature>
<feature type="splice variant" id="VSP_023714" description="In isoform 5." evidence="11">
    <original>GDRD</original>
    <variation>KIFS</variation>
    <location>
        <begin position="91"/>
        <end position="94"/>
    </location>
</feature>
<feature type="splice variant" id="VSP_023715" description="In isoform 2." evidence="10">
    <original>DRMTANHESYLLMASTQNDMEDWVKSIRRVIWGPFGG</original>
    <variation>MPEDRNSGGCPAGALASTPFIPKTTYRRIKRCFSFRK</variation>
    <location>
        <begin position="94"/>
        <end position="130"/>
    </location>
</feature>
<feature type="splice variant" id="VSP_023716" description="In isoform 5." evidence="11">
    <location>
        <begin position="95"/>
        <end position="748"/>
    </location>
</feature>
<feature type="splice variant" id="VSP_023717" description="In isoform 4." evidence="12">
    <original>GV</original>
    <variation>VS</variation>
    <location>
        <begin position="245"/>
        <end position="246"/>
    </location>
</feature>
<feature type="splice variant" id="VSP_023718" description="In isoform 4." evidence="12">
    <location>
        <begin position="247"/>
        <end position="748"/>
    </location>
</feature>
<feature type="mutagenesis site" description="Loss of function." evidence="7 8">
    <original>R</original>
    <variation>A</variation>
    <location>
        <position position="175"/>
    </location>
</feature>
<feature type="mutagenesis site" description="Does not abolish the effect on actin stress fibers but moderates its capability to induce membrane protrusions." evidence="7 8">
    <original>R</original>
    <variation>K</variation>
    <location>
        <position position="175"/>
    </location>
</feature>
<feature type="sequence conflict" description="In Ref. 2; BAC03606." evidence="13" ref="2">
    <original>T</original>
    <variation>A</variation>
    <location>
        <position position="140"/>
    </location>
</feature>
<feature type="sequence conflict" description="In Ref. 1; CAB66581." evidence="13" ref="1">
    <original>Q</original>
    <variation>L</variation>
    <location>
        <position position="357"/>
    </location>
</feature>
<feature type="sequence conflict" description="In Ref. 2; BAC03606." evidence="13" ref="2">
    <original>M</original>
    <variation>V</variation>
    <location>
        <position position="722"/>
    </location>
</feature>
<name>RHG24_HUMAN</name>
<reference key="1">
    <citation type="journal article" date="2001" name="Genome Res.">
        <title>Towards a catalog of human genes and proteins: sequencing and analysis of 500 novel complete protein coding human cDNAs.</title>
        <authorList>
            <person name="Wiemann S."/>
            <person name="Weil B."/>
            <person name="Wellenreuther R."/>
            <person name="Gassenhuber J."/>
            <person name="Glassl S."/>
            <person name="Ansorge W."/>
            <person name="Boecher M."/>
            <person name="Bloecker H."/>
            <person name="Bauersachs S."/>
            <person name="Blum H."/>
            <person name="Lauber J."/>
            <person name="Duesterhoeft A."/>
            <person name="Beyer A."/>
            <person name="Koehrer K."/>
            <person name="Strack N."/>
            <person name="Mewes H.-W."/>
            <person name="Ottenwaelder B."/>
            <person name="Obermaier B."/>
            <person name="Tampe J."/>
            <person name="Heubner D."/>
            <person name="Wambutt R."/>
            <person name="Korn B."/>
            <person name="Klein M."/>
            <person name="Poustka A."/>
        </authorList>
    </citation>
    <scope>NUCLEOTIDE SEQUENCE [LARGE SCALE MRNA] (ISOFORM 2)</scope>
    <source>
        <tissue>Brain</tissue>
    </source>
</reference>
<reference key="2">
    <citation type="journal article" date="2004" name="Nat. Genet.">
        <title>Complete sequencing and characterization of 21,243 full-length human cDNAs.</title>
        <authorList>
            <person name="Ota T."/>
            <person name="Suzuki Y."/>
            <person name="Nishikawa T."/>
            <person name="Otsuki T."/>
            <person name="Sugiyama T."/>
            <person name="Irie R."/>
            <person name="Wakamatsu A."/>
            <person name="Hayashi K."/>
            <person name="Sato H."/>
            <person name="Nagai K."/>
            <person name="Kimura K."/>
            <person name="Makita H."/>
            <person name="Sekine M."/>
            <person name="Obayashi M."/>
            <person name="Nishi T."/>
            <person name="Shibahara T."/>
            <person name="Tanaka T."/>
            <person name="Ishii S."/>
            <person name="Yamamoto J."/>
            <person name="Saito K."/>
            <person name="Kawai Y."/>
            <person name="Isono Y."/>
            <person name="Nakamura Y."/>
            <person name="Nagahari K."/>
            <person name="Murakami K."/>
            <person name="Yasuda T."/>
            <person name="Iwayanagi T."/>
            <person name="Wagatsuma M."/>
            <person name="Shiratori A."/>
            <person name="Sudo H."/>
            <person name="Hosoiri T."/>
            <person name="Kaku Y."/>
            <person name="Kodaira H."/>
            <person name="Kondo H."/>
            <person name="Sugawara M."/>
            <person name="Takahashi M."/>
            <person name="Kanda K."/>
            <person name="Yokoi T."/>
            <person name="Furuya T."/>
            <person name="Kikkawa E."/>
            <person name="Omura Y."/>
            <person name="Abe K."/>
            <person name="Kamihara K."/>
            <person name="Katsuta N."/>
            <person name="Sato K."/>
            <person name="Tanikawa M."/>
            <person name="Yamazaki M."/>
            <person name="Ninomiya K."/>
            <person name="Ishibashi T."/>
            <person name="Yamashita H."/>
            <person name="Murakawa K."/>
            <person name="Fujimori K."/>
            <person name="Tanai H."/>
            <person name="Kimata M."/>
            <person name="Watanabe M."/>
            <person name="Hiraoka S."/>
            <person name="Chiba Y."/>
            <person name="Ishida S."/>
            <person name="Ono Y."/>
            <person name="Takiguchi S."/>
            <person name="Watanabe S."/>
            <person name="Yosida M."/>
            <person name="Hotuta T."/>
            <person name="Kusano J."/>
            <person name="Kanehori K."/>
            <person name="Takahashi-Fujii A."/>
            <person name="Hara H."/>
            <person name="Tanase T.-O."/>
            <person name="Nomura Y."/>
            <person name="Togiya S."/>
            <person name="Komai F."/>
            <person name="Hara R."/>
            <person name="Takeuchi K."/>
            <person name="Arita M."/>
            <person name="Imose N."/>
            <person name="Musashino K."/>
            <person name="Yuuki H."/>
            <person name="Oshima A."/>
            <person name="Sasaki N."/>
            <person name="Aotsuka S."/>
            <person name="Yoshikawa Y."/>
            <person name="Matsunawa H."/>
            <person name="Ichihara T."/>
            <person name="Shiohata N."/>
            <person name="Sano S."/>
            <person name="Moriya S."/>
            <person name="Momiyama H."/>
            <person name="Satoh N."/>
            <person name="Takami S."/>
            <person name="Terashima Y."/>
            <person name="Suzuki O."/>
            <person name="Nakagawa S."/>
            <person name="Senoh A."/>
            <person name="Mizoguchi H."/>
            <person name="Goto Y."/>
            <person name="Shimizu F."/>
            <person name="Wakebe H."/>
            <person name="Hishigaki H."/>
            <person name="Watanabe T."/>
            <person name="Sugiyama A."/>
            <person name="Takemoto M."/>
            <person name="Kawakami B."/>
            <person name="Yamazaki M."/>
            <person name="Watanabe K."/>
            <person name="Kumagai A."/>
            <person name="Itakura S."/>
            <person name="Fukuzumi Y."/>
            <person name="Fujimori Y."/>
            <person name="Komiyama M."/>
            <person name="Tashiro H."/>
            <person name="Tanigami A."/>
            <person name="Fujiwara T."/>
            <person name="Ono T."/>
            <person name="Yamada K."/>
            <person name="Fujii Y."/>
            <person name="Ozaki K."/>
            <person name="Hirao M."/>
            <person name="Ohmori Y."/>
            <person name="Kawabata A."/>
            <person name="Hikiji T."/>
            <person name="Kobatake N."/>
            <person name="Inagaki H."/>
            <person name="Ikema Y."/>
            <person name="Okamoto S."/>
            <person name="Okitani R."/>
            <person name="Kawakami T."/>
            <person name="Noguchi S."/>
            <person name="Itoh T."/>
            <person name="Shigeta K."/>
            <person name="Senba T."/>
            <person name="Matsumura K."/>
            <person name="Nakajima Y."/>
            <person name="Mizuno T."/>
            <person name="Morinaga M."/>
            <person name="Sasaki M."/>
            <person name="Togashi T."/>
            <person name="Oyama M."/>
            <person name="Hata H."/>
            <person name="Watanabe M."/>
            <person name="Komatsu T."/>
            <person name="Mizushima-Sugano J."/>
            <person name="Satoh T."/>
            <person name="Shirai Y."/>
            <person name="Takahashi Y."/>
            <person name="Nakagawa K."/>
            <person name="Okumura K."/>
            <person name="Nagase T."/>
            <person name="Nomura N."/>
            <person name="Kikuchi H."/>
            <person name="Masuho Y."/>
            <person name="Yamashita R."/>
            <person name="Nakai K."/>
            <person name="Yada T."/>
            <person name="Nakamura Y."/>
            <person name="Ohara O."/>
            <person name="Isogai T."/>
            <person name="Sugano S."/>
        </authorList>
    </citation>
    <scope>NUCLEOTIDE SEQUENCE [LARGE SCALE MRNA] (ISOFORMS 1 AND 5)</scope>
    <source>
        <tissue>Spleen</tissue>
        <tissue>Tongue</tissue>
    </source>
</reference>
<reference key="3">
    <citation type="journal article" date="2004" name="Genome Res.">
        <title>The status, quality, and expansion of the NIH full-length cDNA project: the Mammalian Gene Collection (MGC).</title>
        <authorList>
            <consortium name="The MGC Project Team"/>
        </authorList>
    </citation>
    <scope>NUCLEOTIDE SEQUENCE [LARGE SCALE MRNA] (ISOFORMS 3 AND 4)</scope>
    <source>
        <tissue>Chondrosarcoma</tissue>
    </source>
</reference>
<reference key="4">
    <citation type="journal article" date="2003" name="Proc. Natl. Acad. Sci. U.S.A.">
        <title>Immunomic analysis of human sarcoma.</title>
        <authorList>
            <person name="Lee S.-Y."/>
            <person name="Obata Y."/>
            <person name="Yoshida M."/>
            <person name="Stockert E."/>
            <person name="Williamson B."/>
            <person name="Jungbluth A.A."/>
            <person name="Chen Y.-T."/>
            <person name="Old L.J."/>
            <person name="Scanlan M.J."/>
        </authorList>
    </citation>
    <scope>NUCLEOTIDE SEQUENCE [MRNA] OF 233-510</scope>
</reference>
<reference key="5">
    <citation type="journal article" date="2004" name="Int. J. Mol. Med.">
        <title>Identification and characterization of ARHGAP24 and ARHGAP25 genes in silico.</title>
        <authorList>
            <person name="Katoh M."/>
            <person name="Katoh M."/>
        </authorList>
    </citation>
    <scope>IDENTIFICATION</scope>
</reference>
<reference key="6">
    <citation type="journal article" date="2004" name="Proc. Natl. Acad. Sci. U.S.A.">
        <title>A vascular cell-restricted RhoGAP, p73RhoGAP, is a key regulator of angiogenesis.</title>
        <authorList>
            <person name="Su Z.-J."/>
            <person name="Hahn C.N."/>
            <person name="Goodall G.J."/>
            <person name="Reck N.M."/>
            <person name="Leske A.F."/>
            <person name="Davy A."/>
            <person name="Kremmidiotis G."/>
            <person name="Vadas M.A."/>
            <person name="Gamble J.R."/>
        </authorList>
    </citation>
    <scope>FUNCTION</scope>
    <scope>TISSUE SPECIFICITY</scope>
    <scope>INDUCTION</scope>
    <scope>MUTAGENESIS OF ARG-175</scope>
</reference>
<reference key="7">
    <citation type="journal article" date="2005" name="J. Biol. Chem.">
        <title>Characterization of a novel GTPase-activating protein associated with focal adhesions and the actin cytoskeleton.</title>
        <authorList>
            <person name="Lavelin I."/>
            <person name="Geiger B."/>
        </authorList>
    </citation>
    <scope>FUNCTION</scope>
    <scope>SUBCELLULAR LOCATION</scope>
    <scope>TISSUE SPECIFICITY</scope>
    <scope>MUTAGENESIS OF ARG-175</scope>
</reference>
<reference key="8">
    <citation type="journal article" date="2006" name="Nat. Cell Biol.">
        <title>FilGAP, a Rho- and ROCK-regulated GAP for Rac binds filamin A to control actin remodelling.</title>
        <authorList>
            <person name="Ohta Y."/>
            <person name="Hartwig J.H."/>
            <person name="Stossel T.P."/>
        </authorList>
    </citation>
    <scope>FUNCTION</scope>
    <scope>SUBCELLULAR LOCATION</scope>
    <scope>TISSUE SPECIFICITY</scope>
    <scope>INTERACTION WITH FLNA</scope>
    <scope>PHOSPHORYLATION AT SER-391; SER-402; SER-413; SER-415; SER-437 AND THR-452</scope>
</reference>
<reference key="9">
    <citation type="journal article" date="2013" name="J. Proteome Res.">
        <title>Toward a comprehensive characterization of a human cancer cell phosphoproteome.</title>
        <authorList>
            <person name="Zhou H."/>
            <person name="Di Palma S."/>
            <person name="Preisinger C."/>
            <person name="Peng M."/>
            <person name="Polat A.N."/>
            <person name="Heck A.J."/>
            <person name="Mohammed S."/>
        </authorList>
    </citation>
    <scope>PHOSPHORYLATION [LARGE SCALE ANALYSIS] AT SER-415</scope>
    <scope>IDENTIFICATION BY MASS SPECTROMETRY [LARGE SCALE ANALYSIS]</scope>
    <source>
        <tissue>Erythroleukemia</tissue>
    </source>
</reference>
<accession>Q8N264</accession>
<accession>Q4KMG1</accession>
<accession>Q6ZNV3</accession>
<accession>Q86TI5</accession>
<accession>Q86WE4</accession>
<accession>Q9H0T6</accession>
<organism>
    <name type="scientific">Homo sapiens</name>
    <name type="common">Human</name>
    <dbReference type="NCBI Taxonomy" id="9606"/>
    <lineage>
        <taxon>Eukaryota</taxon>
        <taxon>Metazoa</taxon>
        <taxon>Chordata</taxon>
        <taxon>Craniata</taxon>
        <taxon>Vertebrata</taxon>
        <taxon>Euteleostomi</taxon>
        <taxon>Mammalia</taxon>
        <taxon>Eutheria</taxon>
        <taxon>Euarchontoglires</taxon>
        <taxon>Primates</taxon>
        <taxon>Haplorrhini</taxon>
        <taxon>Catarrhini</taxon>
        <taxon>Hominidae</taxon>
        <taxon>Homo</taxon>
    </lineage>
</organism>
<comment type="function">
    <text evidence="7 8 9">Rho GTPase-activating protein involved in cell polarity, cell morphology and cytoskeletal organization. Acts as a GTPase activator for the Rac-type GTPase by converting it to an inactive GDP-bound state. Controls actin remodeling by inactivating Rac downstream of Rho leading to suppress leading edge protrusion and promotes cell retraction to achieve cellular polarity. Able to suppress RAC1 and CDC42 activity in vitro. Overexpression induces cell rounding with partial or complete disruption of actin stress fibers and formation of membrane ruffles, lamellipodia, and filopodia. Isoform 2 is a vascular cell-specific GAP involved in modulation of angiogenesis.</text>
</comment>
<comment type="subunit">
    <text evidence="9">Interacts with FLNA.</text>
</comment>
<comment type="interaction">
    <interactant intactId="EBI-988764">
        <id>Q8N264</id>
    </interactant>
    <interactant intactId="EBI-350432">
        <id>P21333</id>
        <label>FLNA</label>
    </interactant>
    <organismsDiffer>false</organismsDiffer>
    <experiments>6</experiments>
</comment>
<comment type="interaction">
    <interactant intactId="EBI-988764">
        <id>Q8N264</id>
    </interactant>
    <interactant intactId="EBI-466029">
        <id>P42858</id>
        <label>HTT</label>
    </interactant>
    <organismsDiffer>false</organismsDiffer>
    <experiments>3</experiments>
</comment>
<comment type="subcellular location">
    <subcellularLocation>
        <location>Cytoplasm</location>
        <location>Cytoskeleton</location>
    </subcellularLocation>
    <subcellularLocation>
        <location>Cell junction</location>
        <location>Adherens junction</location>
    </subcellularLocation>
    <subcellularLocation>
        <location>Cell junction</location>
        <location>Focal adhesion</location>
    </subcellularLocation>
    <subcellularLocation>
        <location>Cell projection</location>
    </subcellularLocation>
    <text>Localizes to actin stress fibers. In migrating cells, localizes to membrane lamellae and protusions.</text>
</comment>
<comment type="alternative products">
    <event type="alternative splicing"/>
    <isoform>
        <id>Q8N264-1</id>
        <name>1</name>
        <sequence type="displayed"/>
    </isoform>
    <isoform>
        <id>Q8N264-2</id>
        <name>2</name>
        <sequence type="described" ref="VSP_023712 VSP_023715"/>
    </isoform>
    <isoform>
        <id>Q8N264-3</id>
        <name>3</name>
        <sequence type="described" ref="VSP_023711"/>
    </isoform>
    <isoform>
        <id>Q8N264-4</id>
        <name>4</name>
        <sequence type="described" ref="VSP_023717 VSP_023718"/>
    </isoform>
    <isoform>
        <id>Q8N264-5</id>
        <name>5</name>
        <sequence type="described" ref="VSP_023713 VSP_023714 VSP_023716"/>
    </isoform>
</comment>
<comment type="tissue specificity">
    <text evidence="7 8 9">Isoform 1 is widely expressed with a higher level in kidney. Isoform 2 is mainly expressed in endothelial cells.</text>
</comment>
<comment type="induction">
    <molecule>Isoform 2</molecule>
    <text evidence="7">Up-regulated during capillary tube formation in umbilical vein endothelial cells.</text>
</comment>
<comment type="domain">
    <text>The coiled coil domain mediates the interaction with FLNA leading to its recruitment to lamellae.</text>
</comment>
<comment type="PTM">
    <text evidence="9">Phosphorylated by ROCK, leading to activate the RacGAP activity.</text>
</comment>
<comment type="sequence caution" evidence="13">
    <conflict type="frameshift">
        <sequence resource="EMBL-CDS" id="AAO65178"/>
    </conflict>
</comment>
<gene>
    <name type="primary">ARHGAP24</name>
    <name type="synonym">FILGAP</name>
</gene>
<protein>
    <recommendedName>
        <fullName>Rho GTPase-activating protein 24</fullName>
    </recommendedName>
    <alternativeName>
        <fullName>Filamin-A-associated RhoGAP</fullName>
        <shortName>FilGAP</shortName>
    </alternativeName>
    <alternativeName>
        <fullName>RAC1- and CDC42-specific GTPase-activating protein of 72 kDa</fullName>
        <shortName>RC-GAP72</shortName>
    </alternativeName>
    <alternativeName>
        <fullName>Rho-type GTPase-activating protein 24</fullName>
    </alternativeName>
    <alternativeName>
        <fullName>RhoGAP of 73 kDa</fullName>
    </alternativeName>
    <alternativeName>
        <fullName>Sarcoma antigen NY-SAR-88</fullName>
    </alternativeName>
    <alternativeName>
        <fullName>p73RhoGAP</fullName>
    </alternativeName>
</protein>
<dbReference type="EMBL" id="AL136646">
    <property type="protein sequence ID" value="CAB66581.1"/>
    <property type="molecule type" value="mRNA"/>
</dbReference>
<dbReference type="EMBL" id="AK091196">
    <property type="protein sequence ID" value="BAC03606.1"/>
    <property type="molecule type" value="mRNA"/>
</dbReference>
<dbReference type="EMBL" id="AK130576">
    <property type="protein sequence ID" value="BAC85384.1"/>
    <property type="molecule type" value="mRNA"/>
</dbReference>
<dbReference type="EMBL" id="BC047918">
    <property type="protein sequence ID" value="AAH47918.1"/>
    <property type="molecule type" value="mRNA"/>
</dbReference>
<dbReference type="EMBL" id="BC098580">
    <property type="protein sequence ID" value="AAH98580.1"/>
    <property type="molecule type" value="mRNA"/>
</dbReference>
<dbReference type="EMBL" id="AY211925">
    <property type="protein sequence ID" value="AAO65178.1"/>
    <property type="status" value="ALT_FRAME"/>
    <property type="molecule type" value="mRNA"/>
</dbReference>
<dbReference type="CCDS" id="CCDS34025.1">
    <molecule id="Q8N264-1"/>
</dbReference>
<dbReference type="CCDS" id="CCDS3611.1">
    <molecule id="Q8N264-2"/>
</dbReference>
<dbReference type="CCDS" id="CCDS43246.1">
    <molecule id="Q8N264-3"/>
</dbReference>
<dbReference type="PIR" id="A59430">
    <property type="entry name" value="A59430"/>
</dbReference>
<dbReference type="RefSeq" id="NP_001020787.2">
    <molecule id="Q8N264-1"/>
    <property type="nucleotide sequence ID" value="NM_001025616.3"/>
</dbReference>
<dbReference type="RefSeq" id="NP_001036134.1">
    <molecule id="Q8N264-3"/>
    <property type="nucleotide sequence ID" value="NM_001042669.2"/>
</dbReference>
<dbReference type="RefSeq" id="NP_112595.2">
    <molecule id="Q8N264-2"/>
    <property type="nucleotide sequence ID" value="NM_031305.3"/>
</dbReference>
<dbReference type="RefSeq" id="XP_011530602.1">
    <molecule id="Q8N264-3"/>
    <property type="nucleotide sequence ID" value="XM_011532300.3"/>
</dbReference>
<dbReference type="RefSeq" id="XP_024310006.1">
    <molecule id="Q8N264-3"/>
    <property type="nucleotide sequence ID" value="XM_024454238.2"/>
</dbReference>
<dbReference type="RefSeq" id="XP_047272191.1">
    <molecule id="Q8N264-3"/>
    <property type="nucleotide sequence ID" value="XM_047416235.1"/>
</dbReference>
<dbReference type="RefSeq" id="XP_054206928.1">
    <molecule id="Q8N264-3"/>
    <property type="nucleotide sequence ID" value="XM_054350953.1"/>
</dbReference>
<dbReference type="RefSeq" id="XP_054206929.1">
    <molecule id="Q8N264-3"/>
    <property type="nucleotide sequence ID" value="XM_054350954.1"/>
</dbReference>
<dbReference type="SMR" id="Q8N264"/>
<dbReference type="BioGRID" id="123663">
    <property type="interactions" value="482"/>
</dbReference>
<dbReference type="DIP" id="DIP-35520N"/>
<dbReference type="FunCoup" id="Q8N264">
    <property type="interactions" value="141"/>
</dbReference>
<dbReference type="IntAct" id="Q8N264">
    <property type="interactions" value="26"/>
</dbReference>
<dbReference type="STRING" id="9606.ENSP00000378611"/>
<dbReference type="GlyGen" id="Q8N264">
    <property type="glycosylation" value="1 site, 1 O-linked glycan (1 site)"/>
</dbReference>
<dbReference type="iPTMnet" id="Q8N264"/>
<dbReference type="PhosphoSitePlus" id="Q8N264"/>
<dbReference type="BioMuta" id="ARHGAP24"/>
<dbReference type="DMDM" id="134035016"/>
<dbReference type="jPOST" id="Q8N264"/>
<dbReference type="MassIVE" id="Q8N264"/>
<dbReference type="PaxDb" id="9606-ENSP00000378611"/>
<dbReference type="PeptideAtlas" id="Q8N264"/>
<dbReference type="ProteomicsDB" id="71656">
    <molecule id="Q8N264-1"/>
</dbReference>
<dbReference type="ProteomicsDB" id="71657">
    <molecule id="Q8N264-2"/>
</dbReference>
<dbReference type="ProteomicsDB" id="71658">
    <molecule id="Q8N264-3"/>
</dbReference>
<dbReference type="ProteomicsDB" id="71659">
    <molecule id="Q8N264-4"/>
</dbReference>
<dbReference type="ProteomicsDB" id="71660">
    <molecule id="Q8N264-5"/>
</dbReference>
<dbReference type="Pumba" id="Q8N264"/>
<dbReference type="Antibodypedia" id="2133">
    <property type="antibodies" value="175 antibodies from 22 providers"/>
</dbReference>
<dbReference type="DNASU" id="83478"/>
<dbReference type="Ensembl" id="ENST00000264343.4">
    <molecule id="Q8N264-2"/>
    <property type="protein sequence ID" value="ENSP00000264343.4"/>
    <property type="gene ID" value="ENSG00000138639.18"/>
</dbReference>
<dbReference type="Ensembl" id="ENST00000395183.6">
    <molecule id="Q8N264-3"/>
    <property type="protein sequence ID" value="ENSP00000378610.2"/>
    <property type="gene ID" value="ENSG00000138639.18"/>
</dbReference>
<dbReference type="Ensembl" id="ENST00000395184.6">
    <molecule id="Q8N264-1"/>
    <property type="protein sequence ID" value="ENSP00000378611.1"/>
    <property type="gene ID" value="ENSG00000138639.18"/>
</dbReference>
<dbReference type="Ensembl" id="ENST00000503995.5">
    <molecule id="Q8N264-4"/>
    <property type="protein sequence ID" value="ENSP00000423206.1"/>
    <property type="gene ID" value="ENSG00000138639.18"/>
</dbReference>
<dbReference type="GeneID" id="83478"/>
<dbReference type="KEGG" id="hsa:83478"/>
<dbReference type="MANE-Select" id="ENST00000395184.6">
    <property type="protein sequence ID" value="ENSP00000378611.1"/>
    <property type="RefSeq nucleotide sequence ID" value="NM_001025616.3"/>
    <property type="RefSeq protein sequence ID" value="NP_001020787.2"/>
</dbReference>
<dbReference type="UCSC" id="uc003hpj.4">
    <molecule id="Q8N264-1"/>
    <property type="organism name" value="human"/>
</dbReference>
<dbReference type="AGR" id="HGNC:25361"/>
<dbReference type="CTD" id="83478"/>
<dbReference type="DisGeNET" id="83478"/>
<dbReference type="GeneCards" id="ARHGAP24"/>
<dbReference type="HGNC" id="HGNC:25361">
    <property type="gene designation" value="ARHGAP24"/>
</dbReference>
<dbReference type="HPA" id="ENSG00000138639">
    <property type="expression patterns" value="Tissue enhanced (kidney)"/>
</dbReference>
<dbReference type="MalaCards" id="ARHGAP24"/>
<dbReference type="MIM" id="610586">
    <property type="type" value="gene"/>
</dbReference>
<dbReference type="neXtProt" id="NX_Q8N264"/>
<dbReference type="OpenTargets" id="ENSG00000138639"/>
<dbReference type="Orphanet" id="656">
    <property type="disease" value="Hereditary steroid-resistant nephrotic syndrome"/>
</dbReference>
<dbReference type="PharmGKB" id="PA134934054"/>
<dbReference type="VEuPathDB" id="HostDB:ENSG00000138639"/>
<dbReference type="eggNOG" id="KOG4270">
    <property type="taxonomic scope" value="Eukaryota"/>
</dbReference>
<dbReference type="GeneTree" id="ENSGT00950000183015"/>
<dbReference type="HOGENOM" id="CLU_047977_1_0_1"/>
<dbReference type="InParanoid" id="Q8N264"/>
<dbReference type="OMA" id="QNAMKCG"/>
<dbReference type="OrthoDB" id="185175at2759"/>
<dbReference type="PAN-GO" id="Q8N264">
    <property type="GO annotations" value="6 GO annotations based on evolutionary models"/>
</dbReference>
<dbReference type="PhylomeDB" id="Q8N264"/>
<dbReference type="TreeFam" id="TF323577"/>
<dbReference type="PathwayCommons" id="Q8N264"/>
<dbReference type="Reactome" id="R-HSA-8980692">
    <property type="pathway name" value="RHOA GTPase cycle"/>
</dbReference>
<dbReference type="Reactome" id="R-HSA-9013148">
    <property type="pathway name" value="CDC42 GTPase cycle"/>
</dbReference>
<dbReference type="Reactome" id="R-HSA-9013149">
    <property type="pathway name" value="RAC1 GTPase cycle"/>
</dbReference>
<dbReference type="SignaLink" id="Q8N264"/>
<dbReference type="SIGNOR" id="Q8N264"/>
<dbReference type="BioGRID-ORCS" id="83478">
    <property type="hits" value="20 hits in 1153 CRISPR screens"/>
</dbReference>
<dbReference type="ChiTaRS" id="ARHGAP24">
    <property type="organism name" value="human"/>
</dbReference>
<dbReference type="GeneWiki" id="ARHGAP24"/>
<dbReference type="GenomeRNAi" id="83478"/>
<dbReference type="Pharos" id="Q8N264">
    <property type="development level" value="Tbio"/>
</dbReference>
<dbReference type="PRO" id="PR:Q8N264"/>
<dbReference type="Proteomes" id="UP000005640">
    <property type="component" value="Chromosome 4"/>
</dbReference>
<dbReference type="RNAct" id="Q8N264">
    <property type="molecule type" value="protein"/>
</dbReference>
<dbReference type="Bgee" id="ENSG00000138639">
    <property type="expression patterns" value="Expressed in renal medulla and 182 other cell types or tissues"/>
</dbReference>
<dbReference type="ExpressionAtlas" id="Q8N264">
    <property type="expression patterns" value="baseline and differential"/>
</dbReference>
<dbReference type="GO" id="GO:0005912">
    <property type="term" value="C:adherens junction"/>
    <property type="evidence" value="ECO:0007669"/>
    <property type="project" value="UniProtKB-SubCell"/>
</dbReference>
<dbReference type="GO" id="GO:0042995">
    <property type="term" value="C:cell projection"/>
    <property type="evidence" value="ECO:0007669"/>
    <property type="project" value="UniProtKB-SubCell"/>
</dbReference>
<dbReference type="GO" id="GO:0005737">
    <property type="term" value="C:cytoplasm"/>
    <property type="evidence" value="ECO:0007669"/>
    <property type="project" value="UniProtKB-KW"/>
</dbReference>
<dbReference type="GO" id="GO:0005856">
    <property type="term" value="C:cytoskeleton"/>
    <property type="evidence" value="ECO:0007669"/>
    <property type="project" value="UniProtKB-SubCell"/>
</dbReference>
<dbReference type="GO" id="GO:0005925">
    <property type="term" value="C:focal adhesion"/>
    <property type="evidence" value="ECO:0000318"/>
    <property type="project" value="GO_Central"/>
</dbReference>
<dbReference type="GO" id="GO:0005096">
    <property type="term" value="F:GTPase activator activity"/>
    <property type="evidence" value="ECO:0000318"/>
    <property type="project" value="GO_Central"/>
</dbReference>
<dbReference type="GO" id="GO:0001525">
    <property type="term" value="P:angiogenesis"/>
    <property type="evidence" value="ECO:0007669"/>
    <property type="project" value="UniProtKB-KW"/>
</dbReference>
<dbReference type="GO" id="GO:0030154">
    <property type="term" value="P:cell differentiation"/>
    <property type="evidence" value="ECO:0007669"/>
    <property type="project" value="UniProtKB-KW"/>
</dbReference>
<dbReference type="GO" id="GO:0035021">
    <property type="term" value="P:negative regulation of Rac protein signal transduction"/>
    <property type="evidence" value="ECO:0000318"/>
    <property type="project" value="GO_Central"/>
</dbReference>
<dbReference type="GO" id="GO:1900028">
    <property type="term" value="P:negative regulation of ruffle assembly"/>
    <property type="evidence" value="ECO:0000318"/>
    <property type="project" value="GO_Central"/>
</dbReference>
<dbReference type="GO" id="GO:0007165">
    <property type="term" value="P:signal transduction"/>
    <property type="evidence" value="ECO:0007669"/>
    <property type="project" value="InterPro"/>
</dbReference>
<dbReference type="GO" id="GO:0035313">
    <property type="term" value="P:wound healing, spreading of epidermal cells"/>
    <property type="evidence" value="ECO:0000318"/>
    <property type="project" value="GO_Central"/>
</dbReference>
<dbReference type="CDD" id="cd13379">
    <property type="entry name" value="PH_RhoGap24"/>
    <property type="match status" value="1"/>
</dbReference>
<dbReference type="CDD" id="cd04390">
    <property type="entry name" value="RhoGAP_ARHGAP22_24_25"/>
    <property type="match status" value="1"/>
</dbReference>
<dbReference type="FunFam" id="2.30.29.30:FF:000120">
    <property type="entry name" value="rho GTPase-activating protein 22 isoform X1"/>
    <property type="match status" value="1"/>
</dbReference>
<dbReference type="FunFam" id="1.10.555.10:FF:000015">
    <property type="entry name" value="rho GTPase-activating protein 25 isoform X1"/>
    <property type="match status" value="1"/>
</dbReference>
<dbReference type="Gene3D" id="2.30.29.30">
    <property type="entry name" value="Pleckstrin-homology domain (PH domain)/Phosphotyrosine-binding domain (PTB)"/>
    <property type="match status" value="1"/>
</dbReference>
<dbReference type="Gene3D" id="1.10.555.10">
    <property type="entry name" value="Rho GTPase activation protein"/>
    <property type="match status" value="1"/>
</dbReference>
<dbReference type="InterPro" id="IPR011993">
    <property type="entry name" value="PH-like_dom_sf"/>
</dbReference>
<dbReference type="InterPro" id="IPR001849">
    <property type="entry name" value="PH_domain"/>
</dbReference>
<dbReference type="InterPro" id="IPR008936">
    <property type="entry name" value="Rho_GTPase_activation_prot"/>
</dbReference>
<dbReference type="InterPro" id="IPR051025">
    <property type="entry name" value="RhoGAP"/>
</dbReference>
<dbReference type="InterPro" id="IPR000198">
    <property type="entry name" value="RhoGAP_dom"/>
</dbReference>
<dbReference type="PANTHER" id="PTHR15228:SF19">
    <property type="entry name" value="RHO GTPASE-ACTIVATING PROTEIN 24"/>
    <property type="match status" value="1"/>
</dbReference>
<dbReference type="PANTHER" id="PTHR15228">
    <property type="entry name" value="SPERMATHECAL PHYSIOLOGY VARIANT"/>
    <property type="match status" value="1"/>
</dbReference>
<dbReference type="Pfam" id="PF00169">
    <property type="entry name" value="PH"/>
    <property type="match status" value="1"/>
</dbReference>
<dbReference type="Pfam" id="PF00620">
    <property type="entry name" value="RhoGAP"/>
    <property type="match status" value="1"/>
</dbReference>
<dbReference type="SMART" id="SM00233">
    <property type="entry name" value="PH"/>
    <property type="match status" value="1"/>
</dbReference>
<dbReference type="SMART" id="SM00324">
    <property type="entry name" value="RhoGAP"/>
    <property type="match status" value="1"/>
</dbReference>
<dbReference type="SUPFAM" id="SSF48350">
    <property type="entry name" value="GTPase activation domain, GAP"/>
    <property type="match status" value="1"/>
</dbReference>
<dbReference type="SUPFAM" id="SSF50729">
    <property type="entry name" value="PH domain-like"/>
    <property type="match status" value="1"/>
</dbReference>
<dbReference type="PROSITE" id="PS50003">
    <property type="entry name" value="PH_DOMAIN"/>
    <property type="match status" value="1"/>
</dbReference>
<dbReference type="PROSITE" id="PS50238">
    <property type="entry name" value="RHOGAP"/>
    <property type="match status" value="1"/>
</dbReference>